<gene>
    <name evidence="1" type="primary">groES</name>
    <name evidence="1" type="synonym">groS</name>
    <name type="ordered locus">Acry_2504</name>
</gene>
<protein>
    <recommendedName>
        <fullName evidence="1">Co-chaperonin GroES</fullName>
    </recommendedName>
    <alternativeName>
        <fullName evidence="1">10 kDa chaperonin</fullName>
    </alternativeName>
    <alternativeName>
        <fullName evidence="1">Chaperonin-10</fullName>
        <shortName evidence="1">Cpn10</shortName>
    </alternativeName>
</protein>
<reference key="1">
    <citation type="submission" date="2007-05" db="EMBL/GenBank/DDBJ databases">
        <title>Complete sequence of chromosome of Acidiphilium cryptum JF-5.</title>
        <authorList>
            <consortium name="US DOE Joint Genome Institute"/>
            <person name="Copeland A."/>
            <person name="Lucas S."/>
            <person name="Lapidus A."/>
            <person name="Barry K."/>
            <person name="Detter J.C."/>
            <person name="Glavina del Rio T."/>
            <person name="Hammon N."/>
            <person name="Israni S."/>
            <person name="Dalin E."/>
            <person name="Tice H."/>
            <person name="Pitluck S."/>
            <person name="Sims D."/>
            <person name="Brettin T."/>
            <person name="Bruce D."/>
            <person name="Han C."/>
            <person name="Schmutz J."/>
            <person name="Larimer F."/>
            <person name="Land M."/>
            <person name="Hauser L."/>
            <person name="Kyrpides N."/>
            <person name="Kim E."/>
            <person name="Magnuson T."/>
            <person name="Richardson P."/>
        </authorList>
    </citation>
    <scope>NUCLEOTIDE SEQUENCE [LARGE SCALE GENOMIC DNA]</scope>
    <source>
        <strain>JF-5</strain>
    </source>
</reference>
<keyword id="KW-0143">Chaperone</keyword>
<keyword id="KW-0963">Cytoplasm</keyword>
<keyword id="KW-1185">Reference proteome</keyword>
<feature type="chain" id="PRO_1000082363" description="Co-chaperonin GroES">
    <location>
        <begin position="1"/>
        <end position="104"/>
    </location>
</feature>
<sequence>MKFRPLHDRVVVRRLNAEEKTAGGIIIPDTAKEKPMEGEVIAVGPGARNEAGAVVALDVKAGDRILFGKWSGTEVKIDGEELLIMKESDIMGIIEGTASKKKAA</sequence>
<comment type="function">
    <text evidence="1">Together with the chaperonin GroEL, plays an essential role in assisting protein folding. The GroEL-GroES system forms a nano-cage that allows encapsulation of the non-native substrate proteins and provides a physical environment optimized to promote and accelerate protein folding. GroES binds to the apical surface of the GroEL ring, thereby capping the opening of the GroEL channel.</text>
</comment>
<comment type="subunit">
    <text evidence="1">Heptamer of 7 subunits arranged in a ring. Interacts with the chaperonin GroEL.</text>
</comment>
<comment type="subcellular location">
    <subcellularLocation>
        <location evidence="1">Cytoplasm</location>
    </subcellularLocation>
</comment>
<comment type="similarity">
    <text evidence="1">Belongs to the GroES chaperonin family.</text>
</comment>
<dbReference type="EMBL" id="CP000697">
    <property type="protein sequence ID" value="ABQ31695.1"/>
    <property type="molecule type" value="Genomic_DNA"/>
</dbReference>
<dbReference type="RefSeq" id="WP_007423235.1">
    <property type="nucleotide sequence ID" value="NC_009484.1"/>
</dbReference>
<dbReference type="SMR" id="A5G1G3"/>
<dbReference type="STRING" id="349163.Acry_2504"/>
<dbReference type="KEGG" id="acr:Acry_2504"/>
<dbReference type="eggNOG" id="COG0234">
    <property type="taxonomic scope" value="Bacteria"/>
</dbReference>
<dbReference type="HOGENOM" id="CLU_132825_1_0_5"/>
<dbReference type="Proteomes" id="UP000000245">
    <property type="component" value="Chromosome"/>
</dbReference>
<dbReference type="GO" id="GO:0005737">
    <property type="term" value="C:cytoplasm"/>
    <property type="evidence" value="ECO:0007669"/>
    <property type="project" value="UniProtKB-SubCell"/>
</dbReference>
<dbReference type="GO" id="GO:0005524">
    <property type="term" value="F:ATP binding"/>
    <property type="evidence" value="ECO:0007669"/>
    <property type="project" value="InterPro"/>
</dbReference>
<dbReference type="GO" id="GO:0046872">
    <property type="term" value="F:metal ion binding"/>
    <property type="evidence" value="ECO:0007669"/>
    <property type="project" value="TreeGrafter"/>
</dbReference>
<dbReference type="GO" id="GO:0044183">
    <property type="term" value="F:protein folding chaperone"/>
    <property type="evidence" value="ECO:0007669"/>
    <property type="project" value="InterPro"/>
</dbReference>
<dbReference type="GO" id="GO:0051087">
    <property type="term" value="F:protein-folding chaperone binding"/>
    <property type="evidence" value="ECO:0007669"/>
    <property type="project" value="TreeGrafter"/>
</dbReference>
<dbReference type="GO" id="GO:0051082">
    <property type="term" value="F:unfolded protein binding"/>
    <property type="evidence" value="ECO:0007669"/>
    <property type="project" value="TreeGrafter"/>
</dbReference>
<dbReference type="GO" id="GO:0051085">
    <property type="term" value="P:chaperone cofactor-dependent protein refolding"/>
    <property type="evidence" value="ECO:0007669"/>
    <property type="project" value="TreeGrafter"/>
</dbReference>
<dbReference type="CDD" id="cd00320">
    <property type="entry name" value="cpn10"/>
    <property type="match status" value="1"/>
</dbReference>
<dbReference type="FunFam" id="2.30.33.40:FF:000001">
    <property type="entry name" value="10 kDa chaperonin"/>
    <property type="match status" value="1"/>
</dbReference>
<dbReference type="Gene3D" id="2.30.33.40">
    <property type="entry name" value="GroES chaperonin"/>
    <property type="match status" value="1"/>
</dbReference>
<dbReference type="HAMAP" id="MF_00580">
    <property type="entry name" value="CH10"/>
    <property type="match status" value="1"/>
</dbReference>
<dbReference type="InterPro" id="IPR020818">
    <property type="entry name" value="Chaperonin_GroES"/>
</dbReference>
<dbReference type="InterPro" id="IPR037124">
    <property type="entry name" value="Chaperonin_GroES_sf"/>
</dbReference>
<dbReference type="InterPro" id="IPR018369">
    <property type="entry name" value="Chaprnonin_Cpn10_CS"/>
</dbReference>
<dbReference type="InterPro" id="IPR011032">
    <property type="entry name" value="GroES-like_sf"/>
</dbReference>
<dbReference type="NCBIfam" id="NF001527">
    <property type="entry name" value="PRK00364.1-2"/>
    <property type="match status" value="1"/>
</dbReference>
<dbReference type="NCBIfam" id="NF001529">
    <property type="entry name" value="PRK00364.1-5"/>
    <property type="match status" value="1"/>
</dbReference>
<dbReference type="NCBIfam" id="NF001531">
    <property type="entry name" value="PRK00364.2-2"/>
    <property type="match status" value="1"/>
</dbReference>
<dbReference type="NCBIfam" id="NF001533">
    <property type="entry name" value="PRK00364.2-4"/>
    <property type="match status" value="1"/>
</dbReference>
<dbReference type="NCBIfam" id="NF001534">
    <property type="entry name" value="PRK00364.2-5"/>
    <property type="match status" value="1"/>
</dbReference>
<dbReference type="PANTHER" id="PTHR10772">
    <property type="entry name" value="10 KDA HEAT SHOCK PROTEIN"/>
    <property type="match status" value="1"/>
</dbReference>
<dbReference type="PANTHER" id="PTHR10772:SF58">
    <property type="entry name" value="CO-CHAPERONIN GROES"/>
    <property type="match status" value="1"/>
</dbReference>
<dbReference type="Pfam" id="PF00166">
    <property type="entry name" value="Cpn10"/>
    <property type="match status" value="1"/>
</dbReference>
<dbReference type="PRINTS" id="PR00297">
    <property type="entry name" value="CHAPERONIN10"/>
</dbReference>
<dbReference type="SMART" id="SM00883">
    <property type="entry name" value="Cpn10"/>
    <property type="match status" value="1"/>
</dbReference>
<dbReference type="SUPFAM" id="SSF50129">
    <property type="entry name" value="GroES-like"/>
    <property type="match status" value="1"/>
</dbReference>
<dbReference type="PROSITE" id="PS00681">
    <property type="entry name" value="CHAPERONINS_CPN10"/>
    <property type="match status" value="1"/>
</dbReference>
<organism>
    <name type="scientific">Acidiphilium cryptum (strain JF-5)</name>
    <dbReference type="NCBI Taxonomy" id="349163"/>
    <lineage>
        <taxon>Bacteria</taxon>
        <taxon>Pseudomonadati</taxon>
        <taxon>Pseudomonadota</taxon>
        <taxon>Alphaproteobacteria</taxon>
        <taxon>Acetobacterales</taxon>
        <taxon>Acidocellaceae</taxon>
        <taxon>Acidiphilium</taxon>
    </lineage>
</organism>
<name>CH10_ACICJ</name>
<evidence type="ECO:0000255" key="1">
    <source>
        <dbReference type="HAMAP-Rule" id="MF_00580"/>
    </source>
</evidence>
<proteinExistence type="inferred from homology"/>
<accession>A5G1G3</accession>